<gene>
    <name type="primary">TBL4</name>
    <name type="ordered locus">At5g49340</name>
    <name type="ORF">K21P3.1</name>
</gene>
<feature type="chain" id="PRO_0000425370" description="Protein trichome birefringence-like 4">
    <location>
        <begin position="1"/>
        <end position="457"/>
    </location>
</feature>
<feature type="transmembrane region" description="Helical; Signal-anchor for type II membrane protein" evidence="3">
    <location>
        <begin position="19"/>
        <end position="37"/>
    </location>
</feature>
<feature type="short sequence motif" description="GDS motif">
    <location>
        <begin position="173"/>
        <end position="175"/>
    </location>
</feature>
<feature type="short sequence motif" description="DCXHWCLPGXXDXWN motif">
    <location>
        <begin position="420"/>
        <end position="434"/>
    </location>
</feature>
<keyword id="KW-0472">Membrane</keyword>
<keyword id="KW-1185">Reference proteome</keyword>
<keyword id="KW-0735">Signal-anchor</keyword>
<keyword id="KW-0812">Transmembrane</keyword>
<keyword id="KW-1133">Transmembrane helix</keyword>
<evidence type="ECO:0000250" key="1">
    <source>
        <dbReference type="UniProtKB" id="Q9FG35"/>
    </source>
</evidence>
<evidence type="ECO:0000250" key="2">
    <source>
        <dbReference type="UniProtKB" id="Q9LY46"/>
    </source>
</evidence>
<evidence type="ECO:0000255" key="3"/>
<evidence type="ECO:0000305" key="4"/>
<evidence type="ECO:0000305" key="5">
    <source>
    </source>
</evidence>
<name>TBL4_ARATH</name>
<sequence length="457" mass="52302">MADLKNLFLITKHPSTTQIFLTSLFFLSLFLLSSSSLSDFSPSLIVSSFTSRLLTAANFFSSPSSYTSSASDTTMFLSSVSPRRINEPKIDSETKELASCDIFDGTWVFDDSEPVYLPGYCPFVEDKFNCFKNGRPDSGFLRHRWQPHGCSIPRFDGKKMLKMLRGKRVVFVGDSLNRNMWESLVCSLRSTLEDKNRVSKIIGKQSNLPNEGFYGFRFNDFECSIDFIKSPFLVQESEVVDVYGKRRETLRLDMIQRSMTKIYKNADIVIFNTGHWWTHQKTYEGKGYYQEGNRVYERLEVKEAYTKAIHTWADWVDSNINSTKTRVFFVGYSSSHFRKGAWNSGGQCDGETRPIQNETYTGVYPWMMKVVESVISEMKTPVFYMNITKMTWYRTDGHPSVYRQPADPRGTSPAAGMYQDCSHWCLPGVPDSWNQLLYATLLVSHGSLPDKSLGSLL</sequence>
<proteinExistence type="inferred from homology"/>
<comment type="function">
    <text evidence="1 2">May act as a bridging protein that binds pectin and other cell wall polysaccharides. Probably involved in maintaining esterification of pectins (By similarity). May be involved in the specific O-acetylation of cell wall polymers (By similarity).</text>
</comment>
<comment type="subcellular location">
    <subcellularLocation>
        <location evidence="4">Membrane</location>
        <topology evidence="4">Single-pass membrane protein</topology>
    </subcellularLocation>
</comment>
<comment type="miscellaneous">
    <text evidence="5">Contains 2 motifs that are conserved in esterases, but it is unlikely that this protein belongs to the catalytically active pectin esterases.</text>
</comment>
<comment type="similarity">
    <text evidence="4">Belongs to the PC-esterase family. TBL subfamily.</text>
</comment>
<reference key="1">
    <citation type="journal article" date="1998" name="DNA Res.">
        <title>Structural analysis of Arabidopsis thaliana chromosome 5. VIII. Sequence features of the regions of 1,081,958 bp covered by seventeen physically assigned P1 and TAC clones.</title>
        <authorList>
            <person name="Asamizu E."/>
            <person name="Sato S."/>
            <person name="Kaneko T."/>
            <person name="Nakamura Y."/>
            <person name="Kotani H."/>
            <person name="Miyajima N."/>
            <person name="Tabata S."/>
        </authorList>
    </citation>
    <scope>NUCLEOTIDE SEQUENCE [LARGE SCALE GENOMIC DNA]</scope>
    <source>
        <strain>cv. Columbia</strain>
    </source>
</reference>
<reference key="2">
    <citation type="journal article" date="2000" name="DNA Res.">
        <title>Structural analysis of Arabidopsis thaliana chromosome 5. X. Sequence features of the regions of 3,076,755 bp covered by sixty P1 and TAC clones.</title>
        <authorList>
            <person name="Sato S."/>
            <person name="Nakamura Y."/>
            <person name="Kaneko T."/>
            <person name="Katoh T."/>
            <person name="Asamizu E."/>
            <person name="Kotani H."/>
            <person name="Tabata S."/>
        </authorList>
    </citation>
    <scope>NUCLEOTIDE SEQUENCE [LARGE SCALE GENOMIC DNA]</scope>
    <source>
        <strain>cv. Columbia</strain>
    </source>
</reference>
<reference key="3">
    <citation type="journal article" date="2017" name="Plant J.">
        <title>Araport11: a complete reannotation of the Arabidopsis thaliana reference genome.</title>
        <authorList>
            <person name="Cheng C.Y."/>
            <person name="Krishnakumar V."/>
            <person name="Chan A.P."/>
            <person name="Thibaud-Nissen F."/>
            <person name="Schobel S."/>
            <person name="Town C.D."/>
        </authorList>
    </citation>
    <scope>GENOME REANNOTATION</scope>
    <source>
        <strain>cv. Columbia</strain>
    </source>
</reference>
<reference key="4">
    <citation type="journal article" date="2007" name="Plant J.">
        <title>Arabidopsis ESK1 encodes a novel regulator of freezing tolerance.</title>
        <authorList>
            <person name="Xin Z."/>
            <person name="Mandaokar A."/>
            <person name="Chen J."/>
            <person name="Last R.L."/>
            <person name="Browse J."/>
        </authorList>
    </citation>
    <scope>GENE FAMILY</scope>
    <source>
        <strain>cv. Columbia</strain>
    </source>
</reference>
<reference key="5">
    <citation type="journal article" date="2010" name="Plant Physiol.">
        <title>TRICHOME BIREFRINGENCE and its homolog AT5G01360 encode plant-specific DUF231 proteins required for cellulose biosynthesis in Arabidopsis.</title>
        <authorList>
            <person name="Bischoff V."/>
            <person name="Nita S."/>
            <person name="Neumetzler L."/>
            <person name="Schindelasch D."/>
            <person name="Urbain A."/>
            <person name="Eshed R."/>
            <person name="Persson S."/>
            <person name="Delmer D."/>
            <person name="Scheible W.R."/>
        </authorList>
    </citation>
    <scope>GENE FAMILY</scope>
    <scope>NOMENCLATURE</scope>
</reference>
<reference key="6">
    <citation type="journal article" date="2010" name="Plant Signal. Behav.">
        <title>Involvement of TBL/DUF231 proteins into cell wall biology.</title>
        <authorList>
            <person name="Bischoff V."/>
            <person name="Selbig J."/>
            <person name="Scheible W.R."/>
        </authorList>
    </citation>
    <scope>3D-STRUCTURE MODELING</scope>
</reference>
<accession>Q9FJ06</accession>
<organism>
    <name type="scientific">Arabidopsis thaliana</name>
    <name type="common">Mouse-ear cress</name>
    <dbReference type="NCBI Taxonomy" id="3702"/>
    <lineage>
        <taxon>Eukaryota</taxon>
        <taxon>Viridiplantae</taxon>
        <taxon>Streptophyta</taxon>
        <taxon>Embryophyta</taxon>
        <taxon>Tracheophyta</taxon>
        <taxon>Spermatophyta</taxon>
        <taxon>Magnoliopsida</taxon>
        <taxon>eudicotyledons</taxon>
        <taxon>Gunneridae</taxon>
        <taxon>Pentapetalae</taxon>
        <taxon>rosids</taxon>
        <taxon>malvids</taxon>
        <taxon>Brassicales</taxon>
        <taxon>Brassicaceae</taxon>
        <taxon>Camelineae</taxon>
        <taxon>Arabidopsis</taxon>
    </lineage>
</organism>
<dbReference type="EMBL" id="AB016872">
    <property type="protein sequence ID" value="BAB10352.1"/>
    <property type="molecule type" value="Genomic_DNA"/>
</dbReference>
<dbReference type="EMBL" id="AB023034">
    <property type="protein sequence ID" value="BAB10352.1"/>
    <property type="status" value="JOINED"/>
    <property type="molecule type" value="Genomic_DNA"/>
</dbReference>
<dbReference type="EMBL" id="CP002688">
    <property type="protein sequence ID" value="AED95799.1"/>
    <property type="molecule type" value="Genomic_DNA"/>
</dbReference>
<dbReference type="RefSeq" id="NP_199745.1">
    <property type="nucleotide sequence ID" value="NM_124311.2"/>
</dbReference>
<dbReference type="SMR" id="Q9FJ06"/>
<dbReference type="STRING" id="3702.Q9FJ06"/>
<dbReference type="PaxDb" id="3702-AT5G49340.1"/>
<dbReference type="EnsemblPlants" id="AT5G49340.1">
    <property type="protein sequence ID" value="AT5G49340.1"/>
    <property type="gene ID" value="AT5G49340"/>
</dbReference>
<dbReference type="GeneID" id="834994"/>
<dbReference type="Gramene" id="AT5G49340.1">
    <property type="protein sequence ID" value="AT5G49340.1"/>
    <property type="gene ID" value="AT5G49340"/>
</dbReference>
<dbReference type="KEGG" id="ath:AT5G49340"/>
<dbReference type="Araport" id="AT5G49340"/>
<dbReference type="TAIR" id="AT5G49340">
    <property type="gene designation" value="TBL4"/>
</dbReference>
<dbReference type="eggNOG" id="ENOG502QSN1">
    <property type="taxonomic scope" value="Eukaryota"/>
</dbReference>
<dbReference type="HOGENOM" id="CLU_020953_0_2_1"/>
<dbReference type="InParanoid" id="Q9FJ06"/>
<dbReference type="OMA" id="FQEGSHV"/>
<dbReference type="PhylomeDB" id="Q9FJ06"/>
<dbReference type="PRO" id="PR:Q9FJ06"/>
<dbReference type="Proteomes" id="UP000006548">
    <property type="component" value="Chromosome 5"/>
</dbReference>
<dbReference type="ExpressionAtlas" id="Q9FJ06">
    <property type="expression patterns" value="baseline and differential"/>
</dbReference>
<dbReference type="GO" id="GO:0016020">
    <property type="term" value="C:membrane"/>
    <property type="evidence" value="ECO:0007669"/>
    <property type="project" value="UniProtKB-SubCell"/>
</dbReference>
<dbReference type="GO" id="GO:0016413">
    <property type="term" value="F:O-acetyltransferase activity"/>
    <property type="evidence" value="ECO:0007669"/>
    <property type="project" value="InterPro"/>
</dbReference>
<dbReference type="InterPro" id="IPR029962">
    <property type="entry name" value="TBL"/>
</dbReference>
<dbReference type="InterPro" id="IPR026057">
    <property type="entry name" value="TBL_C"/>
</dbReference>
<dbReference type="InterPro" id="IPR025846">
    <property type="entry name" value="TBL_N"/>
</dbReference>
<dbReference type="PANTHER" id="PTHR32285:SF241">
    <property type="entry name" value="PROTEIN TRICHOME BIREFRINGENCE-LIKE 4"/>
    <property type="match status" value="1"/>
</dbReference>
<dbReference type="PANTHER" id="PTHR32285">
    <property type="entry name" value="PROTEIN TRICHOME BIREFRINGENCE-LIKE 9-RELATED"/>
    <property type="match status" value="1"/>
</dbReference>
<dbReference type="Pfam" id="PF13839">
    <property type="entry name" value="PC-Esterase"/>
    <property type="match status" value="1"/>
</dbReference>
<dbReference type="Pfam" id="PF14416">
    <property type="entry name" value="PMR5N"/>
    <property type="match status" value="1"/>
</dbReference>
<protein>
    <recommendedName>
        <fullName>Protein trichome birefringence-like 4</fullName>
    </recommendedName>
</protein>